<accession>Q8VV85</accession>
<proteinExistence type="inferred from homology"/>
<organism>
    <name type="scientific">Parageobacillus thermoglucosidasius</name>
    <name type="common">Geobacillus thermoglucosidasius</name>
    <dbReference type="NCBI Taxonomy" id="1426"/>
    <lineage>
        <taxon>Bacteria</taxon>
        <taxon>Bacillati</taxon>
        <taxon>Bacillota</taxon>
        <taxon>Bacilli</taxon>
        <taxon>Bacillales</taxon>
        <taxon>Anoxybacillaceae</taxon>
        <taxon>Parageobacillus</taxon>
    </lineage>
</organism>
<sequence>MIKPLGDRVVIEIVETEEKTASGIVLPDTAKEKPQEGKVVAVGKGRVLDNGQRVAPEVEVGDRIIFSKYAGTEVKYDGKEYLILRESDILAVIG</sequence>
<comment type="function">
    <text evidence="1">Together with the chaperonin GroEL, plays an essential role in assisting protein folding. The GroEL-GroES system forms a nano-cage that allows encapsulation of the non-native substrate proteins and provides a physical environment optimized to promote and accelerate protein folding. GroES binds to the apical surface of the GroEL ring, thereby capping the opening of the GroEL channel.</text>
</comment>
<comment type="subunit">
    <text evidence="1">Heptamer of 7 subunits arranged in a ring. Interacts with the chaperonin GroEL.</text>
</comment>
<comment type="subcellular location">
    <subcellularLocation>
        <location evidence="1">Cytoplasm</location>
    </subcellularLocation>
</comment>
<comment type="similarity">
    <text evidence="1">Belongs to the GroES chaperonin family.</text>
</comment>
<gene>
    <name evidence="1" type="primary">groES</name>
    <name evidence="1" type="synonym">groS</name>
</gene>
<keyword id="KW-0143">Chaperone</keyword>
<keyword id="KW-0963">Cytoplasm</keyword>
<dbReference type="EMBL" id="AB025944">
    <property type="protein sequence ID" value="BAB83939.1"/>
    <property type="molecule type" value="Genomic_DNA"/>
</dbReference>
<dbReference type="RefSeq" id="WP_003253377.1">
    <property type="nucleotide sequence ID" value="NZ_QQOL01000003.1"/>
</dbReference>
<dbReference type="SMR" id="Q8VV85"/>
<dbReference type="STRING" id="1426.AOT13_04585"/>
<dbReference type="GeneID" id="56924742"/>
<dbReference type="eggNOG" id="COG0234">
    <property type="taxonomic scope" value="Bacteria"/>
</dbReference>
<dbReference type="OMA" id="EDFLIMR"/>
<dbReference type="OrthoDB" id="9806791at2"/>
<dbReference type="GO" id="GO:0005737">
    <property type="term" value="C:cytoplasm"/>
    <property type="evidence" value="ECO:0007669"/>
    <property type="project" value="UniProtKB-SubCell"/>
</dbReference>
<dbReference type="GO" id="GO:0005524">
    <property type="term" value="F:ATP binding"/>
    <property type="evidence" value="ECO:0007669"/>
    <property type="project" value="InterPro"/>
</dbReference>
<dbReference type="GO" id="GO:0046872">
    <property type="term" value="F:metal ion binding"/>
    <property type="evidence" value="ECO:0007669"/>
    <property type="project" value="TreeGrafter"/>
</dbReference>
<dbReference type="GO" id="GO:0044183">
    <property type="term" value="F:protein folding chaperone"/>
    <property type="evidence" value="ECO:0007669"/>
    <property type="project" value="InterPro"/>
</dbReference>
<dbReference type="GO" id="GO:0051087">
    <property type="term" value="F:protein-folding chaperone binding"/>
    <property type="evidence" value="ECO:0007669"/>
    <property type="project" value="TreeGrafter"/>
</dbReference>
<dbReference type="GO" id="GO:0051082">
    <property type="term" value="F:unfolded protein binding"/>
    <property type="evidence" value="ECO:0007669"/>
    <property type="project" value="TreeGrafter"/>
</dbReference>
<dbReference type="GO" id="GO:0051085">
    <property type="term" value="P:chaperone cofactor-dependent protein refolding"/>
    <property type="evidence" value="ECO:0007669"/>
    <property type="project" value="TreeGrafter"/>
</dbReference>
<dbReference type="CDD" id="cd00320">
    <property type="entry name" value="cpn10"/>
    <property type="match status" value="1"/>
</dbReference>
<dbReference type="FunFam" id="2.30.33.40:FF:000001">
    <property type="entry name" value="10 kDa chaperonin"/>
    <property type="match status" value="1"/>
</dbReference>
<dbReference type="Gene3D" id="2.30.33.40">
    <property type="entry name" value="GroES chaperonin"/>
    <property type="match status" value="1"/>
</dbReference>
<dbReference type="HAMAP" id="MF_00580">
    <property type="entry name" value="CH10"/>
    <property type="match status" value="1"/>
</dbReference>
<dbReference type="InterPro" id="IPR020818">
    <property type="entry name" value="Chaperonin_GroES"/>
</dbReference>
<dbReference type="InterPro" id="IPR037124">
    <property type="entry name" value="Chaperonin_GroES_sf"/>
</dbReference>
<dbReference type="InterPro" id="IPR018369">
    <property type="entry name" value="Chaprnonin_Cpn10_CS"/>
</dbReference>
<dbReference type="InterPro" id="IPR011032">
    <property type="entry name" value="GroES-like_sf"/>
</dbReference>
<dbReference type="NCBIfam" id="NF001527">
    <property type="entry name" value="PRK00364.1-2"/>
    <property type="match status" value="1"/>
</dbReference>
<dbReference type="NCBIfam" id="NF001530">
    <property type="entry name" value="PRK00364.1-6"/>
    <property type="match status" value="1"/>
</dbReference>
<dbReference type="NCBIfam" id="NF001531">
    <property type="entry name" value="PRK00364.2-2"/>
    <property type="match status" value="1"/>
</dbReference>
<dbReference type="NCBIfam" id="NF001532">
    <property type="entry name" value="PRK00364.2-3"/>
    <property type="match status" value="1"/>
</dbReference>
<dbReference type="NCBIfam" id="NF001533">
    <property type="entry name" value="PRK00364.2-4"/>
    <property type="match status" value="1"/>
</dbReference>
<dbReference type="NCBIfam" id="NF001534">
    <property type="entry name" value="PRK00364.2-5"/>
    <property type="match status" value="1"/>
</dbReference>
<dbReference type="PANTHER" id="PTHR10772">
    <property type="entry name" value="10 KDA HEAT SHOCK PROTEIN"/>
    <property type="match status" value="1"/>
</dbReference>
<dbReference type="PANTHER" id="PTHR10772:SF58">
    <property type="entry name" value="CO-CHAPERONIN GROES"/>
    <property type="match status" value="1"/>
</dbReference>
<dbReference type="Pfam" id="PF00166">
    <property type="entry name" value="Cpn10"/>
    <property type="match status" value="1"/>
</dbReference>
<dbReference type="PRINTS" id="PR00297">
    <property type="entry name" value="CHAPERONIN10"/>
</dbReference>
<dbReference type="SMART" id="SM00883">
    <property type="entry name" value="Cpn10"/>
    <property type="match status" value="1"/>
</dbReference>
<dbReference type="SUPFAM" id="SSF50129">
    <property type="entry name" value="GroES-like"/>
    <property type="match status" value="1"/>
</dbReference>
<dbReference type="PROSITE" id="PS00681">
    <property type="entry name" value="CHAPERONINS_CPN10"/>
    <property type="match status" value="1"/>
</dbReference>
<evidence type="ECO:0000255" key="1">
    <source>
        <dbReference type="HAMAP-Rule" id="MF_00580"/>
    </source>
</evidence>
<protein>
    <recommendedName>
        <fullName evidence="1">Co-chaperonin GroES</fullName>
    </recommendedName>
    <alternativeName>
        <fullName evidence="1">10 kDa chaperonin</fullName>
    </alternativeName>
    <alternativeName>
        <fullName evidence="1">Chaperonin-10</fullName>
        <shortName evidence="1">Cpn10</shortName>
    </alternativeName>
</protein>
<name>CH10_PARTM</name>
<reference key="1">
    <citation type="journal article" date="2002" name="Biotechnol. Appl. Biochem.">
        <title>Oligo-1,6-glucosidase from a thermophile, Bacillus thermoglucosidasius KP1006, was efficiently produced by combinatorial expression of GroEL in Escherichia coli.</title>
        <authorList>
            <person name="Watanabe K."/>
            <person name="Fujiwara H."/>
            <person name="Inui K."/>
            <person name="Suzuki Y."/>
        </authorList>
    </citation>
    <scope>NUCLEOTIDE SEQUENCE [GENOMIC DNA]</scope>
    <source>
        <strain>ATCC 43742 / DSM 2542 / NCIMB 11955 / NRRL B-14516 / KP 1006</strain>
    </source>
</reference>
<feature type="chain" id="PRO_0000174699" description="Co-chaperonin GroES">
    <location>
        <begin position="1"/>
        <end position="94"/>
    </location>
</feature>